<organism>
    <name type="scientific">Dictyostelium discoideum</name>
    <name type="common">Social amoeba</name>
    <dbReference type="NCBI Taxonomy" id="44689"/>
    <lineage>
        <taxon>Eukaryota</taxon>
        <taxon>Amoebozoa</taxon>
        <taxon>Evosea</taxon>
        <taxon>Eumycetozoa</taxon>
        <taxon>Dictyostelia</taxon>
        <taxon>Dictyosteliales</taxon>
        <taxon>Dictyosteliaceae</taxon>
        <taxon>Dictyostelium</taxon>
    </lineage>
</organism>
<accession>Q54R60</accession>
<dbReference type="EMBL" id="AAFI02000055">
    <property type="protein sequence ID" value="EAL65731.2"/>
    <property type="molecule type" value="Genomic_DNA"/>
</dbReference>
<dbReference type="RefSeq" id="XP_639031.2">
    <property type="nucleotide sequence ID" value="XM_633939.2"/>
</dbReference>
<dbReference type="PaxDb" id="44689-DDB0266580"/>
<dbReference type="EnsemblProtists" id="EAL65731">
    <property type="protein sequence ID" value="EAL65731"/>
    <property type="gene ID" value="DDB_G0283493"/>
</dbReference>
<dbReference type="GeneID" id="8624056"/>
<dbReference type="KEGG" id="ddi:DDB_G0283493"/>
<dbReference type="dictyBase" id="DDB_G0283493"/>
<dbReference type="HOGENOM" id="CLU_2908772_0_0_1"/>
<dbReference type="InParanoid" id="Q54R60"/>
<dbReference type="PRO" id="PR:Q54R60"/>
<dbReference type="Proteomes" id="UP000002195">
    <property type="component" value="Chromosome 4"/>
</dbReference>
<proteinExistence type="predicted"/>
<name>Y3493_DICDI</name>
<reference key="1">
    <citation type="journal article" date="2005" name="Nature">
        <title>The genome of the social amoeba Dictyostelium discoideum.</title>
        <authorList>
            <person name="Eichinger L."/>
            <person name="Pachebat J.A."/>
            <person name="Gloeckner G."/>
            <person name="Rajandream M.A."/>
            <person name="Sucgang R."/>
            <person name="Berriman M."/>
            <person name="Song J."/>
            <person name="Olsen R."/>
            <person name="Szafranski K."/>
            <person name="Xu Q."/>
            <person name="Tunggal B."/>
            <person name="Kummerfeld S."/>
            <person name="Madera M."/>
            <person name="Konfortov B.A."/>
            <person name="Rivero F."/>
            <person name="Bankier A.T."/>
            <person name="Lehmann R."/>
            <person name="Hamlin N."/>
            <person name="Davies R."/>
            <person name="Gaudet P."/>
            <person name="Fey P."/>
            <person name="Pilcher K."/>
            <person name="Chen G."/>
            <person name="Saunders D."/>
            <person name="Sodergren E.J."/>
            <person name="Davis P."/>
            <person name="Kerhornou A."/>
            <person name="Nie X."/>
            <person name="Hall N."/>
            <person name="Anjard C."/>
            <person name="Hemphill L."/>
            <person name="Bason N."/>
            <person name="Farbrother P."/>
            <person name="Desany B."/>
            <person name="Just E."/>
            <person name="Morio T."/>
            <person name="Rost R."/>
            <person name="Churcher C.M."/>
            <person name="Cooper J."/>
            <person name="Haydock S."/>
            <person name="van Driessche N."/>
            <person name="Cronin A."/>
            <person name="Goodhead I."/>
            <person name="Muzny D.M."/>
            <person name="Mourier T."/>
            <person name="Pain A."/>
            <person name="Lu M."/>
            <person name="Harper D."/>
            <person name="Lindsay R."/>
            <person name="Hauser H."/>
            <person name="James K.D."/>
            <person name="Quiles M."/>
            <person name="Madan Babu M."/>
            <person name="Saito T."/>
            <person name="Buchrieser C."/>
            <person name="Wardroper A."/>
            <person name="Felder M."/>
            <person name="Thangavelu M."/>
            <person name="Johnson D."/>
            <person name="Knights A."/>
            <person name="Loulseged H."/>
            <person name="Mungall K.L."/>
            <person name="Oliver K."/>
            <person name="Price C."/>
            <person name="Quail M.A."/>
            <person name="Urushihara H."/>
            <person name="Hernandez J."/>
            <person name="Rabbinowitsch E."/>
            <person name="Steffen D."/>
            <person name="Sanders M."/>
            <person name="Ma J."/>
            <person name="Kohara Y."/>
            <person name="Sharp S."/>
            <person name="Simmonds M.N."/>
            <person name="Spiegler S."/>
            <person name="Tivey A."/>
            <person name="Sugano S."/>
            <person name="White B."/>
            <person name="Walker D."/>
            <person name="Woodward J.R."/>
            <person name="Winckler T."/>
            <person name="Tanaka Y."/>
            <person name="Shaulsky G."/>
            <person name="Schleicher M."/>
            <person name="Weinstock G.M."/>
            <person name="Rosenthal A."/>
            <person name="Cox E.C."/>
            <person name="Chisholm R.L."/>
            <person name="Gibbs R.A."/>
            <person name="Loomis W.F."/>
            <person name="Platzer M."/>
            <person name="Kay R.R."/>
            <person name="Williams J.G."/>
            <person name="Dear P.H."/>
            <person name="Noegel A.A."/>
            <person name="Barrell B.G."/>
            <person name="Kuspa A."/>
        </authorList>
    </citation>
    <scope>NUCLEOTIDE SEQUENCE [LARGE SCALE GENOMIC DNA]</scope>
    <source>
        <strain>AX4</strain>
    </source>
</reference>
<feature type="chain" id="PRO_0000384452" description="Putative uncharacterized protein DDB_G0283493">
    <location>
        <begin position="1"/>
        <end position="62"/>
    </location>
</feature>
<protein>
    <recommendedName>
        <fullName>Putative uncharacterized protein DDB_G0283493</fullName>
    </recommendedName>
</protein>
<sequence length="62" mass="6607">MLFKSLQSISSIKSVSQKSQLKNTISSSQFGSNSNQLLDVAACIDLNLAPLLSVHVDADISL</sequence>
<gene>
    <name type="ORF">DDB_G0283493</name>
</gene>
<keyword id="KW-1185">Reference proteome</keyword>